<organism>
    <name type="scientific">Macaca fascicularis</name>
    <name type="common">Crab-eating macaque</name>
    <name type="synonym">Cynomolgus monkey</name>
    <dbReference type="NCBI Taxonomy" id="9541"/>
    <lineage>
        <taxon>Eukaryota</taxon>
        <taxon>Metazoa</taxon>
        <taxon>Chordata</taxon>
        <taxon>Craniata</taxon>
        <taxon>Vertebrata</taxon>
        <taxon>Euteleostomi</taxon>
        <taxon>Mammalia</taxon>
        <taxon>Eutheria</taxon>
        <taxon>Euarchontoglires</taxon>
        <taxon>Primates</taxon>
        <taxon>Haplorrhini</taxon>
        <taxon>Catarrhini</taxon>
        <taxon>Cercopithecidae</taxon>
        <taxon>Cercopithecinae</taxon>
        <taxon>Macaca</taxon>
    </lineage>
</organism>
<accession>Q9TSM6</accession>
<evidence type="ECO:0000250" key="1"/>
<evidence type="ECO:0000250" key="2">
    <source>
        <dbReference type="UniProtKB" id="Q78EG7"/>
    </source>
</evidence>
<evidence type="ECO:0000250" key="3">
    <source>
        <dbReference type="UniProtKB" id="Q93096"/>
    </source>
</evidence>
<evidence type="ECO:0000255" key="4">
    <source>
        <dbReference type="PROSITE-ProRule" id="PRU00160"/>
    </source>
</evidence>
<evidence type="ECO:0000269" key="5">
    <source>
    </source>
</evidence>
<evidence type="ECO:0000305" key="6"/>
<sequence>MARMNRPAPVEVTYKNMRFLITHNPTNATLNKFIEELKKYGVTTIVRVCEATYDTTLVEKEGIHVLDWPFDDGAPPSNQIVDDWLSLVKIKFREEPGCCIAVHCVAGLGRAPVLVALALIEGGMKYEDAVQFIRQKRRGAFNSKQLLYLEKYRPKMRLRFKDSNGHRNNCCIQ</sequence>
<dbReference type="EC" id="3.1.3.48" evidence="3"/>
<dbReference type="EMBL" id="AF190930">
    <property type="protein sequence ID" value="AAF05715.1"/>
    <property type="molecule type" value="mRNA"/>
</dbReference>
<dbReference type="RefSeq" id="XP_005552682.1">
    <property type="nucleotide sequence ID" value="XM_005552625.2"/>
</dbReference>
<dbReference type="RefSeq" id="XP_005552683.1">
    <property type="nucleotide sequence ID" value="XM_005552626.4"/>
</dbReference>
<dbReference type="RefSeq" id="XP_005570475.1">
    <property type="nucleotide sequence ID" value="XM_005570418.2"/>
</dbReference>
<dbReference type="RefSeq" id="XP_045247022.1">
    <property type="nucleotide sequence ID" value="XM_045391087.2"/>
</dbReference>
<dbReference type="RefSeq" id="XP_045247023.1">
    <property type="nucleotide sequence ID" value="XM_045391088.2"/>
</dbReference>
<dbReference type="BMRB" id="Q9TSM6"/>
<dbReference type="SMR" id="Q9TSM6"/>
<dbReference type="STRING" id="9541.ENSMFAP00000040252"/>
<dbReference type="Ensembl" id="ENSMFAT00000014519.2">
    <property type="protein sequence ID" value="ENSMFAP00000040252.1"/>
    <property type="gene ID" value="ENSMFAG00000046284.2"/>
</dbReference>
<dbReference type="GeneID" id="102134176"/>
<dbReference type="GeneID" id="107126363"/>
<dbReference type="KEGG" id="mcf:102134176"/>
<dbReference type="CTD" id="7803"/>
<dbReference type="VEuPathDB" id="HostDB:ENSMFAG00000046284"/>
<dbReference type="eggNOG" id="KOG2836">
    <property type="taxonomic scope" value="Eukaryota"/>
</dbReference>
<dbReference type="GeneTree" id="ENSGT00940000154406"/>
<dbReference type="OMA" id="IQVHGWT"/>
<dbReference type="Proteomes" id="UP000233100">
    <property type="component" value="Chromosome 4"/>
</dbReference>
<dbReference type="Bgee" id="ENSMFAG00000046284">
    <property type="expression patterns" value="Expressed in liver and 13 other cell types or tissues"/>
</dbReference>
<dbReference type="GO" id="GO:0005769">
    <property type="term" value="C:early endosome"/>
    <property type="evidence" value="ECO:0007669"/>
    <property type="project" value="UniProtKB-SubCell"/>
</dbReference>
<dbReference type="GO" id="GO:0005783">
    <property type="term" value="C:endoplasmic reticulum"/>
    <property type="evidence" value="ECO:0007669"/>
    <property type="project" value="UniProtKB-SubCell"/>
</dbReference>
<dbReference type="GO" id="GO:0005634">
    <property type="term" value="C:nucleus"/>
    <property type="evidence" value="ECO:0007669"/>
    <property type="project" value="UniProtKB-SubCell"/>
</dbReference>
<dbReference type="GO" id="GO:0005886">
    <property type="term" value="C:plasma membrane"/>
    <property type="evidence" value="ECO:0007669"/>
    <property type="project" value="UniProtKB-SubCell"/>
</dbReference>
<dbReference type="GO" id="GO:0005819">
    <property type="term" value="C:spindle"/>
    <property type="evidence" value="ECO:0007669"/>
    <property type="project" value="UniProtKB-SubCell"/>
</dbReference>
<dbReference type="GO" id="GO:0004725">
    <property type="term" value="F:protein tyrosine phosphatase activity"/>
    <property type="evidence" value="ECO:0007669"/>
    <property type="project" value="UniProtKB-EC"/>
</dbReference>
<dbReference type="CDD" id="cd18537">
    <property type="entry name" value="PTP-IVa1"/>
    <property type="match status" value="1"/>
</dbReference>
<dbReference type="FunFam" id="3.90.190.10:FF:000012">
    <property type="entry name" value="protein tyrosine phosphatase type IVA 1"/>
    <property type="match status" value="1"/>
</dbReference>
<dbReference type="Gene3D" id="3.90.190.10">
    <property type="entry name" value="Protein tyrosine phosphatase superfamily"/>
    <property type="match status" value="1"/>
</dbReference>
<dbReference type="InterPro" id="IPR029021">
    <property type="entry name" value="Prot-tyrosine_phosphatase-like"/>
</dbReference>
<dbReference type="InterPro" id="IPR050561">
    <property type="entry name" value="PTP"/>
</dbReference>
<dbReference type="InterPro" id="IPR003595">
    <property type="entry name" value="Tyr_Pase_cat"/>
</dbReference>
<dbReference type="InterPro" id="IPR000387">
    <property type="entry name" value="Tyr_Pase_dom"/>
</dbReference>
<dbReference type="InterPro" id="IPR020422">
    <property type="entry name" value="TYR_PHOSPHATASE_DUAL_dom"/>
</dbReference>
<dbReference type="PANTHER" id="PTHR23339">
    <property type="entry name" value="TYROSINE SPECIFIC PROTEIN PHOSPHATASE AND DUAL SPECIFICITY PROTEIN PHOSPHATASE"/>
    <property type="match status" value="1"/>
</dbReference>
<dbReference type="Pfam" id="PF22785">
    <property type="entry name" value="Tc-R-P"/>
    <property type="match status" value="1"/>
</dbReference>
<dbReference type="SMART" id="SM00404">
    <property type="entry name" value="PTPc_motif"/>
    <property type="match status" value="1"/>
</dbReference>
<dbReference type="SUPFAM" id="SSF52799">
    <property type="entry name" value="(Phosphotyrosine protein) phosphatases II"/>
    <property type="match status" value="1"/>
</dbReference>
<dbReference type="PROSITE" id="PS50056">
    <property type="entry name" value="TYR_PHOSPHATASE_2"/>
    <property type="match status" value="1"/>
</dbReference>
<dbReference type="PROSITE" id="PS50054">
    <property type="entry name" value="TYR_PHOSPHATASE_DUAL"/>
    <property type="match status" value="1"/>
</dbReference>
<comment type="function">
    <text evidence="1">Protein tyrosine phosphatase which stimulates progression from G1 into S phase during mitosis. May play a role in the development and maintenance of differentiating epithelial tissues (By similarity).</text>
</comment>
<comment type="catalytic activity">
    <reaction evidence="3">
        <text>O-phospho-L-tyrosyl-[protein] + H2O = L-tyrosyl-[protein] + phosphate</text>
        <dbReference type="Rhea" id="RHEA:10684"/>
        <dbReference type="Rhea" id="RHEA-COMP:10136"/>
        <dbReference type="Rhea" id="RHEA-COMP:20101"/>
        <dbReference type="ChEBI" id="CHEBI:15377"/>
        <dbReference type="ChEBI" id="CHEBI:43474"/>
        <dbReference type="ChEBI" id="CHEBI:46858"/>
        <dbReference type="ChEBI" id="CHEBI:61978"/>
        <dbReference type="EC" id="3.1.3.48"/>
    </reaction>
</comment>
<comment type="activity regulation">
    <text evidence="1">Inhibited by sodium orthovanadate and pentamidine.</text>
</comment>
<comment type="subunit">
    <text evidence="1">Homotrimer. Interacts with ATF5 and tubulin (By similarity).</text>
</comment>
<comment type="subcellular location">
    <subcellularLocation>
        <location evidence="5">Cell membrane</location>
        <topology evidence="3">Lipid-anchor</topology>
    </subcellularLocation>
    <subcellularLocation>
        <location evidence="5">Early endosome</location>
    </subcellularLocation>
    <subcellularLocation>
        <location evidence="5">Endoplasmic reticulum</location>
    </subcellularLocation>
    <subcellularLocation>
        <location evidence="5">Cytoplasm</location>
    </subcellularLocation>
    <subcellularLocation>
        <location evidence="5">Cytoplasm</location>
        <location evidence="5">Cytoskeleton</location>
        <location evidence="5">Spindle</location>
    </subcellularLocation>
    <subcellularLocation>
        <location evidence="2">Nucleus</location>
    </subcellularLocation>
    <text evidence="5">And mitotic spindle.</text>
</comment>
<comment type="tissue specificity">
    <text evidence="5">In the retina, expressed by red/green- but not blue-sensitive cone photoreceptor cells, and by rod bipolar cells (at protein level).</text>
</comment>
<comment type="PTM">
    <text evidence="1">Farnesylated. Farnesylation is required for membrane targeting (By similarity).</text>
</comment>
<comment type="similarity">
    <text evidence="6">Belongs to the protein-tyrosine phosphatase family.</text>
</comment>
<protein>
    <recommendedName>
        <fullName>Protein tyrosine phosphatase type IVA 1</fullName>
        <ecNumber evidence="3">3.1.3.48</ecNumber>
    </recommendedName>
    <alternativeName>
        <fullName>Protein-tyrosine phosphatase 4a1</fullName>
    </alternativeName>
    <alternativeName>
        <fullName>Protein-tyrosine phosphatase of regenerating liver 1</fullName>
        <shortName>PRL-1</shortName>
    </alternativeName>
</protein>
<reference key="1">
    <citation type="journal article" date="2000" name="Brain Res. Mol. Brain Res.">
        <title>Expression of the protein tyrosine phosphatase, phosphatase of regenerating liver 1, in the outer segments of primate cone photoreceptors.</title>
        <authorList>
            <person name="Yarovinsky T.O."/>
            <person name="Rickman D.W."/>
            <person name="Diamond R.H."/>
            <person name="Taub R."/>
            <person name="Hageman G.S."/>
            <person name="Bowes Rickman C."/>
        </authorList>
    </citation>
    <scope>NUCLEOTIDE SEQUENCE [MRNA]</scope>
    <scope>SUBCELLULAR LOCATION</scope>
    <scope>TISSUE SPECIFICITY</scope>
    <source>
        <tissue>Retina</tissue>
    </source>
</reference>
<keyword id="KW-0131">Cell cycle</keyword>
<keyword id="KW-1003">Cell membrane</keyword>
<keyword id="KW-0963">Cytoplasm</keyword>
<keyword id="KW-0206">Cytoskeleton</keyword>
<keyword id="KW-0217">Developmental protein</keyword>
<keyword id="KW-1015">Disulfide bond</keyword>
<keyword id="KW-0256">Endoplasmic reticulum</keyword>
<keyword id="KW-0967">Endosome</keyword>
<keyword id="KW-0378">Hydrolase</keyword>
<keyword id="KW-0449">Lipoprotein</keyword>
<keyword id="KW-0472">Membrane</keyword>
<keyword id="KW-0488">Methylation</keyword>
<keyword id="KW-0539">Nucleus</keyword>
<keyword id="KW-0636">Prenylation</keyword>
<keyword id="KW-0904">Protein phosphatase</keyword>
<keyword id="KW-1185">Reference proteome</keyword>
<name>TP4A1_MACFA</name>
<feature type="chain" id="PRO_0000094781" description="Protein tyrosine phosphatase type IVA 1">
    <location>
        <begin position="1"/>
        <end position="170"/>
    </location>
</feature>
<feature type="propeptide" id="PRO_0000396727" description="Removed in mature form" evidence="1">
    <location>
        <begin position="171"/>
        <end position="173"/>
    </location>
</feature>
<feature type="domain" description="Tyrosine-protein phosphatase" evidence="4">
    <location>
        <begin position="8"/>
        <end position="161"/>
    </location>
</feature>
<feature type="region of interest" description="Interaction with ATF5" evidence="1">
    <location>
        <begin position="97"/>
        <end position="132"/>
    </location>
</feature>
<feature type="active site" description="Proton donor" evidence="1">
    <location>
        <position position="72"/>
    </location>
</feature>
<feature type="active site" description="Phosphocysteine intermediate" evidence="4">
    <location>
        <position position="104"/>
    </location>
</feature>
<feature type="binding site" evidence="1">
    <location>
        <begin position="105"/>
        <end position="110"/>
    </location>
    <ligand>
        <name>phosphate</name>
        <dbReference type="ChEBI" id="CHEBI:43474"/>
    </ligand>
</feature>
<feature type="binding site" evidence="1">
    <location>
        <position position="110"/>
    </location>
    <ligand>
        <name>substrate</name>
    </ligand>
</feature>
<feature type="modified residue" description="Cysteine methyl ester" evidence="1">
    <location>
        <position position="170"/>
    </location>
</feature>
<feature type="lipid moiety-binding region" description="S-farnesyl cysteine" evidence="3">
    <location>
        <position position="170"/>
    </location>
</feature>
<feature type="disulfide bond" evidence="1">
    <location>
        <begin position="49"/>
        <end position="104"/>
    </location>
</feature>
<gene>
    <name type="primary">PTP4A1</name>
    <name type="synonym">PRL1</name>
</gene>
<proteinExistence type="evidence at protein level"/>